<reference key="1">
    <citation type="journal article" date="2009" name="J. Bacteriol.">
        <title>The complete genome sequence of Helicobacter pylori strain G27.</title>
        <authorList>
            <person name="Baltrus D.A."/>
            <person name="Amieva M.R."/>
            <person name="Covacci A."/>
            <person name="Lowe T.M."/>
            <person name="Merrell D.S."/>
            <person name="Ottemann K.M."/>
            <person name="Stein M."/>
            <person name="Salama N.R."/>
            <person name="Guillemin K."/>
        </authorList>
    </citation>
    <scope>NUCLEOTIDE SEQUENCE [LARGE SCALE GENOMIC DNA]</scope>
    <source>
        <strain>G27</strain>
    </source>
</reference>
<sequence length="335" mass="38648">MNLINEKLNNLENNAAKSPKEAVVLLNMGGPNSLYEVGVFLKNMFDDPFILTIKNNFMRKMVGKMIVNSRIEKSKKIYEKLGGKSPLTPITFALTERLNELDPSRFYTYAMRYTPPYASMVLQDLALKEVESLVFFSMYPQYSSTTTLSSFNDAFNALKSLETFRPKVRVIERFYADKKLNEIILNTILSALNNRKSQDFVLIFSVHGLPKSIVDAGDTYQQECEHHVSLLKELMQQKNIPFKEVLLSYQSKLGPMKWLEPSTEELIEKHRKSHVIIYPLAFTIDNSETLYELDMQYRLMAERLAIKEYLVCPCLNDSIEFAKFIIGLVENLKSE</sequence>
<accession>B5Z875</accession>
<name>HEMH_HELPG</name>
<evidence type="ECO:0000255" key="1">
    <source>
        <dbReference type="HAMAP-Rule" id="MF_00323"/>
    </source>
</evidence>
<comment type="function">
    <text evidence="1">Catalyzes the ferrous insertion into protoporphyrin IX.</text>
</comment>
<comment type="catalytic activity">
    <reaction evidence="1">
        <text>heme b + 2 H(+) = protoporphyrin IX + Fe(2+)</text>
        <dbReference type="Rhea" id="RHEA:22584"/>
        <dbReference type="ChEBI" id="CHEBI:15378"/>
        <dbReference type="ChEBI" id="CHEBI:29033"/>
        <dbReference type="ChEBI" id="CHEBI:57306"/>
        <dbReference type="ChEBI" id="CHEBI:60344"/>
        <dbReference type="EC" id="4.98.1.1"/>
    </reaction>
</comment>
<comment type="pathway">
    <text evidence="1">Porphyrin-containing compound metabolism; protoheme biosynthesis; protoheme from protoporphyrin-IX: step 1/1.</text>
</comment>
<comment type="subcellular location">
    <subcellularLocation>
        <location evidence="1">Cytoplasm</location>
    </subcellularLocation>
</comment>
<comment type="similarity">
    <text evidence="1">Belongs to the ferrochelatase family.</text>
</comment>
<protein>
    <recommendedName>
        <fullName evidence="1">Ferrochelatase</fullName>
        <ecNumber evidence="1">4.98.1.1</ecNumber>
    </recommendedName>
    <alternativeName>
        <fullName evidence="1">Heme synthase</fullName>
    </alternativeName>
    <alternativeName>
        <fullName evidence="1">Protoheme ferro-lyase</fullName>
    </alternativeName>
</protein>
<dbReference type="EC" id="4.98.1.1" evidence="1"/>
<dbReference type="EMBL" id="CP001173">
    <property type="protein sequence ID" value="ACI27774.1"/>
    <property type="molecule type" value="Genomic_DNA"/>
</dbReference>
<dbReference type="RefSeq" id="WP_001049032.1">
    <property type="nucleotide sequence ID" value="NC_011333.1"/>
</dbReference>
<dbReference type="SMR" id="B5Z875"/>
<dbReference type="KEGG" id="hpg:HPG27_1021"/>
<dbReference type="HOGENOM" id="CLU_018884_4_1_7"/>
<dbReference type="UniPathway" id="UPA00252">
    <property type="reaction ID" value="UER00325"/>
</dbReference>
<dbReference type="Proteomes" id="UP000001735">
    <property type="component" value="Chromosome"/>
</dbReference>
<dbReference type="GO" id="GO:0005737">
    <property type="term" value="C:cytoplasm"/>
    <property type="evidence" value="ECO:0007669"/>
    <property type="project" value="UniProtKB-SubCell"/>
</dbReference>
<dbReference type="GO" id="GO:0004325">
    <property type="term" value="F:ferrochelatase activity"/>
    <property type="evidence" value="ECO:0007669"/>
    <property type="project" value="UniProtKB-UniRule"/>
</dbReference>
<dbReference type="GO" id="GO:0046872">
    <property type="term" value="F:metal ion binding"/>
    <property type="evidence" value="ECO:0007669"/>
    <property type="project" value="UniProtKB-KW"/>
</dbReference>
<dbReference type="GO" id="GO:0006783">
    <property type="term" value="P:heme biosynthetic process"/>
    <property type="evidence" value="ECO:0007669"/>
    <property type="project" value="UniProtKB-UniRule"/>
</dbReference>
<dbReference type="CDD" id="cd00419">
    <property type="entry name" value="Ferrochelatase_C"/>
    <property type="match status" value="1"/>
</dbReference>
<dbReference type="CDD" id="cd03411">
    <property type="entry name" value="Ferrochelatase_N"/>
    <property type="match status" value="1"/>
</dbReference>
<dbReference type="Gene3D" id="3.40.50.1400">
    <property type="match status" value="2"/>
</dbReference>
<dbReference type="HAMAP" id="MF_00323">
    <property type="entry name" value="Ferrochelatase"/>
    <property type="match status" value="1"/>
</dbReference>
<dbReference type="InterPro" id="IPR001015">
    <property type="entry name" value="Ferrochelatase"/>
</dbReference>
<dbReference type="InterPro" id="IPR019772">
    <property type="entry name" value="Ferrochelatase_AS"/>
</dbReference>
<dbReference type="InterPro" id="IPR033644">
    <property type="entry name" value="Ferrochelatase_C"/>
</dbReference>
<dbReference type="InterPro" id="IPR033659">
    <property type="entry name" value="Ferrochelatase_N"/>
</dbReference>
<dbReference type="NCBIfam" id="TIGR00109">
    <property type="entry name" value="hemH"/>
    <property type="match status" value="1"/>
</dbReference>
<dbReference type="PANTHER" id="PTHR11108">
    <property type="entry name" value="FERROCHELATASE"/>
    <property type="match status" value="1"/>
</dbReference>
<dbReference type="PANTHER" id="PTHR11108:SF1">
    <property type="entry name" value="FERROCHELATASE, MITOCHONDRIAL"/>
    <property type="match status" value="1"/>
</dbReference>
<dbReference type="Pfam" id="PF00762">
    <property type="entry name" value="Ferrochelatase"/>
    <property type="match status" value="1"/>
</dbReference>
<dbReference type="SUPFAM" id="SSF53800">
    <property type="entry name" value="Chelatase"/>
    <property type="match status" value="1"/>
</dbReference>
<dbReference type="PROSITE" id="PS00534">
    <property type="entry name" value="FERROCHELATASE"/>
    <property type="match status" value="1"/>
</dbReference>
<feature type="chain" id="PRO_1000116050" description="Ferrochelatase">
    <location>
        <begin position="1"/>
        <end position="335"/>
    </location>
</feature>
<feature type="binding site" evidence="1">
    <location>
        <position position="207"/>
    </location>
    <ligand>
        <name>Fe cation</name>
        <dbReference type="ChEBI" id="CHEBI:24875"/>
    </ligand>
</feature>
<feature type="binding site" evidence="1">
    <location>
        <position position="288"/>
    </location>
    <ligand>
        <name>Fe cation</name>
        <dbReference type="ChEBI" id="CHEBI:24875"/>
    </ligand>
</feature>
<gene>
    <name evidence="1" type="primary">hemH</name>
    <name type="ordered locus">HPG27_1021</name>
</gene>
<proteinExistence type="inferred from homology"/>
<keyword id="KW-0963">Cytoplasm</keyword>
<keyword id="KW-0350">Heme biosynthesis</keyword>
<keyword id="KW-0408">Iron</keyword>
<keyword id="KW-0456">Lyase</keyword>
<keyword id="KW-0479">Metal-binding</keyword>
<keyword id="KW-0627">Porphyrin biosynthesis</keyword>
<keyword id="KW-1185">Reference proteome</keyword>
<organism>
    <name type="scientific">Helicobacter pylori (strain G27)</name>
    <dbReference type="NCBI Taxonomy" id="563041"/>
    <lineage>
        <taxon>Bacteria</taxon>
        <taxon>Pseudomonadati</taxon>
        <taxon>Campylobacterota</taxon>
        <taxon>Epsilonproteobacteria</taxon>
        <taxon>Campylobacterales</taxon>
        <taxon>Helicobacteraceae</taxon>
        <taxon>Helicobacter</taxon>
    </lineage>
</organism>